<proteinExistence type="inferred from homology"/>
<evidence type="ECO:0000255" key="1">
    <source>
        <dbReference type="HAMAP-Rule" id="MF_00403"/>
    </source>
</evidence>
<evidence type="ECO:0000256" key="2">
    <source>
        <dbReference type="SAM" id="MobiDB-lite"/>
    </source>
</evidence>
<evidence type="ECO:0000305" key="3"/>
<accession>P0CX00</accession>
<accession>P15756</accession>
<accession>Q9HM82</accession>
<sequence>MTNGKYAARKLKKDRQQRRWSDSEYARRERGLGKKSDPLEGAPQGRGIVLEKVGIEAKQPNSAIRKCVRVQLIKNGKQVTAFCPGDGAISFIDEHDEVTIAGIGGAKGRAMGDLSGVNYKVEKVNGVSLIELVRGNAEKPVR</sequence>
<dbReference type="EMBL" id="AE004437">
    <property type="protein sequence ID" value="AAG20689.1"/>
    <property type="molecule type" value="Genomic_DNA"/>
</dbReference>
<dbReference type="PIR" id="S03581">
    <property type="entry name" value="S03581"/>
</dbReference>
<dbReference type="RefSeq" id="WP_010903993.1">
    <property type="nucleotide sequence ID" value="NC_002607.1"/>
</dbReference>
<dbReference type="SMR" id="P0CX00"/>
<dbReference type="FunCoup" id="P0CX00">
    <property type="interactions" value="142"/>
</dbReference>
<dbReference type="STRING" id="64091.VNG_2658G"/>
<dbReference type="PaxDb" id="64091-VNG_2658G"/>
<dbReference type="KEGG" id="hal:VNG_2658G"/>
<dbReference type="PATRIC" id="fig|64091.14.peg.2066"/>
<dbReference type="HOGENOM" id="CLU_115574_0_1_2"/>
<dbReference type="InParanoid" id="P0CX00"/>
<dbReference type="OrthoDB" id="45154at2157"/>
<dbReference type="PhylomeDB" id="P0CX00"/>
<dbReference type="Proteomes" id="UP000000554">
    <property type="component" value="Chromosome"/>
</dbReference>
<dbReference type="GO" id="GO:0022627">
    <property type="term" value="C:cytosolic small ribosomal subunit"/>
    <property type="evidence" value="ECO:0000318"/>
    <property type="project" value="GO_Central"/>
</dbReference>
<dbReference type="GO" id="GO:0005840">
    <property type="term" value="C:ribosome"/>
    <property type="evidence" value="ECO:0000318"/>
    <property type="project" value="GO_Central"/>
</dbReference>
<dbReference type="GO" id="GO:0019843">
    <property type="term" value="F:rRNA binding"/>
    <property type="evidence" value="ECO:0007669"/>
    <property type="project" value="UniProtKB-UniRule"/>
</dbReference>
<dbReference type="GO" id="GO:0003735">
    <property type="term" value="F:structural constituent of ribosome"/>
    <property type="evidence" value="ECO:0000318"/>
    <property type="project" value="GO_Central"/>
</dbReference>
<dbReference type="GO" id="GO:0006412">
    <property type="term" value="P:translation"/>
    <property type="evidence" value="ECO:0000318"/>
    <property type="project" value="GO_Central"/>
</dbReference>
<dbReference type="CDD" id="cd03367">
    <property type="entry name" value="Ribosomal_S23"/>
    <property type="match status" value="1"/>
</dbReference>
<dbReference type="FunFam" id="2.40.50.140:FF:000007">
    <property type="entry name" value="40S ribosomal protein S23"/>
    <property type="match status" value="1"/>
</dbReference>
<dbReference type="Gene3D" id="2.40.50.140">
    <property type="entry name" value="Nucleic acid-binding proteins"/>
    <property type="match status" value="1"/>
</dbReference>
<dbReference type="HAMAP" id="MF_00403_A">
    <property type="entry name" value="Ribosomal_uS12_A"/>
    <property type="match status" value="1"/>
</dbReference>
<dbReference type="InterPro" id="IPR012340">
    <property type="entry name" value="NA-bd_OB-fold"/>
</dbReference>
<dbReference type="InterPro" id="IPR006032">
    <property type="entry name" value="Ribosomal_uS12"/>
</dbReference>
<dbReference type="InterPro" id="IPR022863">
    <property type="entry name" value="Ribosomal_uS12_arc"/>
</dbReference>
<dbReference type="InterPro" id="IPR005680">
    <property type="entry name" value="Ribosomal_uS12_euk/arc"/>
</dbReference>
<dbReference type="NCBIfam" id="NF003254">
    <property type="entry name" value="PRK04211.1"/>
    <property type="match status" value="1"/>
</dbReference>
<dbReference type="NCBIfam" id="TIGR00982">
    <property type="entry name" value="uS12_E_A"/>
    <property type="match status" value="1"/>
</dbReference>
<dbReference type="PANTHER" id="PTHR11652">
    <property type="entry name" value="30S RIBOSOMAL PROTEIN S12 FAMILY MEMBER"/>
    <property type="match status" value="1"/>
</dbReference>
<dbReference type="Pfam" id="PF00164">
    <property type="entry name" value="Ribosom_S12_S23"/>
    <property type="match status" value="1"/>
</dbReference>
<dbReference type="PIRSF" id="PIRSF002133">
    <property type="entry name" value="Ribosomal_S12/S23"/>
    <property type="match status" value="1"/>
</dbReference>
<dbReference type="SUPFAM" id="SSF50249">
    <property type="entry name" value="Nucleic acid-binding proteins"/>
    <property type="match status" value="1"/>
</dbReference>
<dbReference type="PROSITE" id="PS00055">
    <property type="entry name" value="RIBOSOMAL_S12"/>
    <property type="match status" value="1"/>
</dbReference>
<feature type="chain" id="PRO_0000146366" description="Small ribosomal subunit protein uS12">
    <location>
        <begin position="1"/>
        <end position="142"/>
    </location>
</feature>
<feature type="region of interest" description="Disordered" evidence="2">
    <location>
        <begin position="1"/>
        <end position="44"/>
    </location>
</feature>
<feature type="compositionally biased region" description="Basic residues" evidence="2">
    <location>
        <begin position="7"/>
        <end position="16"/>
    </location>
</feature>
<feature type="compositionally biased region" description="Basic and acidic residues" evidence="2">
    <location>
        <begin position="17"/>
        <end position="38"/>
    </location>
</feature>
<comment type="function">
    <text evidence="1">With S4 and S5 plays an important role in translational accuracy. Located at the interface of the 30S and 50S subunits.</text>
</comment>
<comment type="subunit">
    <text evidence="1">Part of the 30S ribosomal subunit.</text>
</comment>
<comment type="similarity">
    <text evidence="1">Belongs to the universal ribosomal protein uS12 family.</text>
</comment>
<name>RS12_HALSA</name>
<keyword id="KW-1185">Reference proteome</keyword>
<keyword id="KW-0687">Ribonucleoprotein</keyword>
<keyword id="KW-0689">Ribosomal protein</keyword>
<keyword id="KW-0694">RNA-binding</keyword>
<keyword id="KW-0699">rRNA-binding</keyword>
<protein>
    <recommendedName>
        <fullName evidence="1">Small ribosomal subunit protein uS12</fullName>
    </recommendedName>
    <alternativeName>
        <fullName evidence="3">30S ribosomal protein S12</fullName>
    </alternativeName>
    <alternativeName>
        <fullName>HmaS12</fullName>
    </alternativeName>
</protein>
<organism>
    <name type="scientific">Halobacterium salinarum (strain ATCC 700922 / JCM 11081 / NRC-1)</name>
    <name type="common">Halobacterium halobium</name>
    <dbReference type="NCBI Taxonomy" id="64091"/>
    <lineage>
        <taxon>Archaea</taxon>
        <taxon>Methanobacteriati</taxon>
        <taxon>Methanobacteriota</taxon>
        <taxon>Stenosarchaea group</taxon>
        <taxon>Halobacteria</taxon>
        <taxon>Halobacteriales</taxon>
        <taxon>Halobacteriaceae</taxon>
        <taxon>Halobacterium</taxon>
        <taxon>Halobacterium salinarum NRC-34001</taxon>
    </lineage>
</organism>
<reference key="1">
    <citation type="journal article" date="2000" name="Proc. Natl. Acad. Sci. U.S.A.">
        <title>Genome sequence of Halobacterium species NRC-1.</title>
        <authorList>
            <person name="Ng W.V."/>
            <person name="Kennedy S.P."/>
            <person name="Mahairas G.G."/>
            <person name="Berquist B."/>
            <person name="Pan M."/>
            <person name="Shukla H.D."/>
            <person name="Lasky S.R."/>
            <person name="Baliga N.S."/>
            <person name="Thorsson V."/>
            <person name="Sbrogna J."/>
            <person name="Swartzell S."/>
            <person name="Weir D."/>
            <person name="Hall J."/>
            <person name="Dahl T.A."/>
            <person name="Welti R."/>
            <person name="Goo Y.A."/>
            <person name="Leithauser B."/>
            <person name="Keller K."/>
            <person name="Cruz R."/>
            <person name="Danson M.J."/>
            <person name="Hough D.W."/>
            <person name="Maddocks D.G."/>
            <person name="Jablonski P.E."/>
            <person name="Krebs M.P."/>
            <person name="Angevine C.M."/>
            <person name="Dale H."/>
            <person name="Isenbarger T.A."/>
            <person name="Peck R.F."/>
            <person name="Pohlschroder M."/>
            <person name="Spudich J.L."/>
            <person name="Jung K.-H."/>
            <person name="Alam M."/>
            <person name="Freitas T."/>
            <person name="Hou S."/>
            <person name="Daniels C.J."/>
            <person name="Dennis P.P."/>
            <person name="Omer A.D."/>
            <person name="Ebhardt H."/>
            <person name="Lowe T.M."/>
            <person name="Liang P."/>
            <person name="Riley M."/>
            <person name="Hood L."/>
            <person name="DasSarma S."/>
        </authorList>
    </citation>
    <scope>NUCLEOTIDE SEQUENCE [LARGE SCALE GENOMIC DNA]</scope>
    <source>
        <strain>ATCC 700922 / JCM 11081 / NRC-1</strain>
    </source>
</reference>
<gene>
    <name evidence="1" type="primary">rps12</name>
    <name type="ordered locus">VNG_2658G</name>
</gene>